<protein>
    <recommendedName>
        <fullName evidence="1">Peptide chain release factor 3</fullName>
        <shortName evidence="1">RF-3</shortName>
    </recommendedName>
</protein>
<feature type="chain" id="PRO_0000242189" description="Peptide chain release factor 3">
    <location>
        <begin position="1"/>
        <end position="526"/>
    </location>
</feature>
<feature type="domain" description="tr-type G">
    <location>
        <begin position="9"/>
        <end position="277"/>
    </location>
</feature>
<feature type="binding site" evidence="1">
    <location>
        <begin position="18"/>
        <end position="25"/>
    </location>
    <ligand>
        <name>GTP</name>
        <dbReference type="ChEBI" id="CHEBI:37565"/>
    </ligand>
</feature>
<feature type="binding site" evidence="1">
    <location>
        <begin position="86"/>
        <end position="90"/>
    </location>
    <ligand>
        <name>GTP</name>
        <dbReference type="ChEBI" id="CHEBI:37565"/>
    </ligand>
</feature>
<feature type="binding site" evidence="1">
    <location>
        <begin position="140"/>
        <end position="143"/>
    </location>
    <ligand>
        <name>GTP</name>
        <dbReference type="ChEBI" id="CHEBI:37565"/>
    </ligand>
</feature>
<evidence type="ECO:0000255" key="1">
    <source>
        <dbReference type="HAMAP-Rule" id="MF_00072"/>
    </source>
</evidence>
<organism>
    <name type="scientific">Legionella pneumophila subsp. pneumophila (strain Philadelphia 1 / ATCC 33152 / DSM 7513)</name>
    <dbReference type="NCBI Taxonomy" id="272624"/>
    <lineage>
        <taxon>Bacteria</taxon>
        <taxon>Pseudomonadati</taxon>
        <taxon>Pseudomonadota</taxon>
        <taxon>Gammaproteobacteria</taxon>
        <taxon>Legionellales</taxon>
        <taxon>Legionellaceae</taxon>
        <taxon>Legionella</taxon>
    </lineage>
</organism>
<dbReference type="EMBL" id="AE017354">
    <property type="protein sequence ID" value="AAU26960.1"/>
    <property type="molecule type" value="Genomic_DNA"/>
</dbReference>
<dbReference type="RefSeq" id="WP_010946608.1">
    <property type="nucleotide sequence ID" value="NC_002942.5"/>
</dbReference>
<dbReference type="RefSeq" id="YP_094907.1">
    <property type="nucleotide sequence ID" value="NC_002942.5"/>
</dbReference>
<dbReference type="SMR" id="Q5ZX60"/>
<dbReference type="STRING" id="272624.lpg0872"/>
<dbReference type="PaxDb" id="272624-lpg0872"/>
<dbReference type="KEGG" id="lpn:lpg0872"/>
<dbReference type="PATRIC" id="fig|272624.6.peg.905"/>
<dbReference type="eggNOG" id="COG4108">
    <property type="taxonomic scope" value="Bacteria"/>
</dbReference>
<dbReference type="HOGENOM" id="CLU_002794_2_1_6"/>
<dbReference type="OrthoDB" id="9804431at2"/>
<dbReference type="Proteomes" id="UP000000609">
    <property type="component" value="Chromosome"/>
</dbReference>
<dbReference type="GO" id="GO:0005829">
    <property type="term" value="C:cytosol"/>
    <property type="evidence" value="ECO:0007669"/>
    <property type="project" value="TreeGrafter"/>
</dbReference>
<dbReference type="GO" id="GO:0005525">
    <property type="term" value="F:GTP binding"/>
    <property type="evidence" value="ECO:0007669"/>
    <property type="project" value="UniProtKB-UniRule"/>
</dbReference>
<dbReference type="GO" id="GO:0003924">
    <property type="term" value="F:GTPase activity"/>
    <property type="evidence" value="ECO:0007669"/>
    <property type="project" value="InterPro"/>
</dbReference>
<dbReference type="GO" id="GO:0097216">
    <property type="term" value="F:guanosine tetraphosphate binding"/>
    <property type="evidence" value="ECO:0007669"/>
    <property type="project" value="UniProtKB-ARBA"/>
</dbReference>
<dbReference type="GO" id="GO:0016150">
    <property type="term" value="F:translation release factor activity, codon nonspecific"/>
    <property type="evidence" value="ECO:0007669"/>
    <property type="project" value="TreeGrafter"/>
</dbReference>
<dbReference type="GO" id="GO:0016149">
    <property type="term" value="F:translation release factor activity, codon specific"/>
    <property type="evidence" value="ECO:0007669"/>
    <property type="project" value="UniProtKB-UniRule"/>
</dbReference>
<dbReference type="GO" id="GO:0006449">
    <property type="term" value="P:regulation of translational termination"/>
    <property type="evidence" value="ECO:0007669"/>
    <property type="project" value="UniProtKB-UniRule"/>
</dbReference>
<dbReference type="CDD" id="cd04169">
    <property type="entry name" value="RF3"/>
    <property type="match status" value="1"/>
</dbReference>
<dbReference type="CDD" id="cd03689">
    <property type="entry name" value="RF3_II"/>
    <property type="match status" value="1"/>
</dbReference>
<dbReference type="CDD" id="cd16259">
    <property type="entry name" value="RF3_III"/>
    <property type="match status" value="1"/>
</dbReference>
<dbReference type="FunFam" id="2.40.30.10:FF:000040">
    <property type="entry name" value="Peptide chain release factor 3"/>
    <property type="match status" value="1"/>
</dbReference>
<dbReference type="FunFam" id="3.30.70.3280:FF:000001">
    <property type="entry name" value="Peptide chain release factor 3"/>
    <property type="match status" value="1"/>
</dbReference>
<dbReference type="FunFam" id="3.40.50.300:FF:000542">
    <property type="entry name" value="Peptide chain release factor 3"/>
    <property type="match status" value="1"/>
</dbReference>
<dbReference type="Gene3D" id="3.40.50.300">
    <property type="entry name" value="P-loop containing nucleotide triphosphate hydrolases"/>
    <property type="match status" value="2"/>
</dbReference>
<dbReference type="Gene3D" id="3.30.70.3280">
    <property type="entry name" value="Peptide chain release factor 3, domain III"/>
    <property type="match status" value="1"/>
</dbReference>
<dbReference type="HAMAP" id="MF_00072">
    <property type="entry name" value="Rel_fac_3"/>
    <property type="match status" value="1"/>
</dbReference>
<dbReference type="InterPro" id="IPR053905">
    <property type="entry name" value="EF-G-like_DII"/>
</dbReference>
<dbReference type="InterPro" id="IPR035647">
    <property type="entry name" value="EFG_III/V"/>
</dbReference>
<dbReference type="InterPro" id="IPR031157">
    <property type="entry name" value="G_TR_CS"/>
</dbReference>
<dbReference type="InterPro" id="IPR027417">
    <property type="entry name" value="P-loop_NTPase"/>
</dbReference>
<dbReference type="InterPro" id="IPR004548">
    <property type="entry name" value="PrfC"/>
</dbReference>
<dbReference type="InterPro" id="IPR032090">
    <property type="entry name" value="RF3_C"/>
</dbReference>
<dbReference type="InterPro" id="IPR038467">
    <property type="entry name" value="RF3_dom_3_sf"/>
</dbReference>
<dbReference type="InterPro" id="IPR041732">
    <property type="entry name" value="RF3_GTP-bd"/>
</dbReference>
<dbReference type="InterPro" id="IPR005225">
    <property type="entry name" value="Small_GTP-bd"/>
</dbReference>
<dbReference type="InterPro" id="IPR000795">
    <property type="entry name" value="T_Tr_GTP-bd_dom"/>
</dbReference>
<dbReference type="InterPro" id="IPR009000">
    <property type="entry name" value="Transl_B-barrel_sf"/>
</dbReference>
<dbReference type="NCBIfam" id="TIGR00503">
    <property type="entry name" value="prfC"/>
    <property type="match status" value="1"/>
</dbReference>
<dbReference type="NCBIfam" id="NF001964">
    <property type="entry name" value="PRK00741.1"/>
    <property type="match status" value="1"/>
</dbReference>
<dbReference type="NCBIfam" id="TIGR00231">
    <property type="entry name" value="small_GTP"/>
    <property type="match status" value="1"/>
</dbReference>
<dbReference type="PANTHER" id="PTHR43556">
    <property type="entry name" value="PEPTIDE CHAIN RELEASE FACTOR RF3"/>
    <property type="match status" value="1"/>
</dbReference>
<dbReference type="PANTHER" id="PTHR43556:SF2">
    <property type="entry name" value="PEPTIDE CHAIN RELEASE FACTOR RF3"/>
    <property type="match status" value="1"/>
</dbReference>
<dbReference type="Pfam" id="PF22042">
    <property type="entry name" value="EF-G_D2"/>
    <property type="match status" value="1"/>
</dbReference>
<dbReference type="Pfam" id="PF00009">
    <property type="entry name" value="GTP_EFTU"/>
    <property type="match status" value="1"/>
</dbReference>
<dbReference type="Pfam" id="PF16658">
    <property type="entry name" value="RF3_C"/>
    <property type="match status" value="1"/>
</dbReference>
<dbReference type="PRINTS" id="PR00315">
    <property type="entry name" value="ELONGATNFCT"/>
</dbReference>
<dbReference type="SUPFAM" id="SSF54980">
    <property type="entry name" value="EF-G C-terminal domain-like"/>
    <property type="match status" value="1"/>
</dbReference>
<dbReference type="SUPFAM" id="SSF52540">
    <property type="entry name" value="P-loop containing nucleoside triphosphate hydrolases"/>
    <property type="match status" value="1"/>
</dbReference>
<dbReference type="SUPFAM" id="SSF50447">
    <property type="entry name" value="Translation proteins"/>
    <property type="match status" value="1"/>
</dbReference>
<dbReference type="PROSITE" id="PS00301">
    <property type="entry name" value="G_TR_1"/>
    <property type="match status" value="1"/>
</dbReference>
<dbReference type="PROSITE" id="PS51722">
    <property type="entry name" value="G_TR_2"/>
    <property type="match status" value="1"/>
</dbReference>
<keyword id="KW-0963">Cytoplasm</keyword>
<keyword id="KW-0342">GTP-binding</keyword>
<keyword id="KW-0547">Nucleotide-binding</keyword>
<keyword id="KW-0648">Protein biosynthesis</keyword>
<keyword id="KW-1185">Reference proteome</keyword>
<reference key="1">
    <citation type="journal article" date="2004" name="Science">
        <title>The genomic sequence of the accidental pathogen Legionella pneumophila.</title>
        <authorList>
            <person name="Chien M."/>
            <person name="Morozova I."/>
            <person name="Shi S."/>
            <person name="Sheng H."/>
            <person name="Chen J."/>
            <person name="Gomez S.M."/>
            <person name="Asamani G."/>
            <person name="Hill K."/>
            <person name="Nuara J."/>
            <person name="Feder M."/>
            <person name="Rineer J."/>
            <person name="Greenberg J.J."/>
            <person name="Steshenko V."/>
            <person name="Park S.H."/>
            <person name="Zhao B."/>
            <person name="Teplitskaya E."/>
            <person name="Edwards J.R."/>
            <person name="Pampou S."/>
            <person name="Georghiou A."/>
            <person name="Chou I.-C."/>
            <person name="Iannuccilli W."/>
            <person name="Ulz M.E."/>
            <person name="Kim D.H."/>
            <person name="Geringer-Sameth A."/>
            <person name="Goldsberry C."/>
            <person name="Morozov P."/>
            <person name="Fischer S.G."/>
            <person name="Segal G."/>
            <person name="Qu X."/>
            <person name="Rzhetsky A."/>
            <person name="Zhang P."/>
            <person name="Cayanis E."/>
            <person name="De Jong P.J."/>
            <person name="Ju J."/>
            <person name="Kalachikov S."/>
            <person name="Shuman H.A."/>
            <person name="Russo J.J."/>
        </authorList>
    </citation>
    <scope>NUCLEOTIDE SEQUENCE [LARGE SCALE GENOMIC DNA]</scope>
    <source>
        <strain>Philadelphia 1 / ATCC 33152 / DSM 7513</strain>
    </source>
</reference>
<comment type="function">
    <text evidence="1">Increases the formation of ribosomal termination complexes and stimulates activities of RF-1 and RF-2. It binds guanine nucleotides and has strong preference for UGA stop codons. It may interact directly with the ribosome. The stimulation of RF-1 and RF-2 is significantly reduced by GTP and GDP, but not by GMP.</text>
</comment>
<comment type="subcellular location">
    <subcellularLocation>
        <location evidence="1">Cytoplasm</location>
    </subcellularLocation>
</comment>
<comment type="similarity">
    <text evidence="1">Belongs to the TRAFAC class translation factor GTPase superfamily. Classic translation factor GTPase family. PrfC subfamily.</text>
</comment>
<name>RF3_LEGPH</name>
<gene>
    <name evidence="1" type="primary">prfC</name>
    <name type="ordered locus">lpg0872</name>
</gene>
<sequence>MSDFYQDFNKRRTFAIISHPDAGKTTVTEKLLLFGGAIQLAGTVKGRKADRHATSDWMEMEKERGISITTSVMQFIHNQHVINLLDTPGHEDFSEDTYRTLTAVDSALMVIDVAKGVEERTVKLMEVCRLRDTPIMTFINKLDREGREPIDLLDEVESVLGIQCAPITWPVGMGKRFKGIYHRYQDIIYLYQQGSNAKKVEAMQIKGLDNPQLDELIGDSADELREEIELVKGASHEFNLEAYLAGKMTPVYFGSAINNFGIKELLDDFVEYAPGPQPRATQERVVSPHEETFSGFVFKIQANMDPKHRDRIAFVRVCSGSYKKGMKLNHLRIGKEVQISNALTFMAGDRSHTELALAGDIIGLHNHGTIRIGDTFTQGEHLKFTGIPNFAPELFRLVRLRDPLKSKALLKGLIELSEEGATQVFRPLNSNQLILGAVGILQFDVVAHRLKHEYKVDCIYESVNIACARWVYSEDDKAMSEFRTKAYDYLALDGGDMLMYLAPTKVNLTMAEERYPKIKFCATREH</sequence>
<proteinExistence type="inferred from homology"/>
<accession>Q5ZX60</accession>